<protein>
    <recommendedName>
        <fullName evidence="1">Glutamyl-Q tRNA(Asp) synthetase</fullName>
        <shortName evidence="1">Glu-Q-RSs</shortName>
        <ecNumber evidence="1">6.1.1.-</ecNumber>
    </recommendedName>
</protein>
<organism>
    <name type="scientific">Cronobacter sakazakii (strain ATCC BAA-894)</name>
    <name type="common">Enterobacter sakazakii</name>
    <dbReference type="NCBI Taxonomy" id="290339"/>
    <lineage>
        <taxon>Bacteria</taxon>
        <taxon>Pseudomonadati</taxon>
        <taxon>Pseudomonadota</taxon>
        <taxon>Gammaproteobacteria</taxon>
        <taxon>Enterobacterales</taxon>
        <taxon>Enterobacteriaceae</taxon>
        <taxon>Cronobacter</taxon>
    </lineage>
</organism>
<reference key="1">
    <citation type="journal article" date="2010" name="PLoS ONE">
        <title>Genome sequence of Cronobacter sakazakii BAA-894 and comparative genomic hybridization analysis with other Cronobacter species.</title>
        <authorList>
            <person name="Kucerova E."/>
            <person name="Clifton S.W."/>
            <person name="Xia X.Q."/>
            <person name="Long F."/>
            <person name="Porwollik S."/>
            <person name="Fulton L."/>
            <person name="Fronick C."/>
            <person name="Minx P."/>
            <person name="Kyung K."/>
            <person name="Warren W."/>
            <person name="Fulton R."/>
            <person name="Feng D."/>
            <person name="Wollam A."/>
            <person name="Shah N."/>
            <person name="Bhonagiri V."/>
            <person name="Nash W.E."/>
            <person name="Hallsworth-Pepin K."/>
            <person name="Wilson R.K."/>
            <person name="McClelland M."/>
            <person name="Forsythe S.J."/>
        </authorList>
    </citation>
    <scope>NUCLEOTIDE SEQUENCE [LARGE SCALE GENOMIC DNA]</scope>
    <source>
        <strain>ATCC BAA-894</strain>
    </source>
</reference>
<name>GLUQ_CROS8</name>
<keyword id="KW-0030">Aminoacyl-tRNA synthetase</keyword>
<keyword id="KW-0067">ATP-binding</keyword>
<keyword id="KW-0436">Ligase</keyword>
<keyword id="KW-0479">Metal-binding</keyword>
<keyword id="KW-0547">Nucleotide-binding</keyword>
<keyword id="KW-1185">Reference proteome</keyword>
<keyword id="KW-0862">Zinc</keyword>
<dbReference type="EC" id="6.1.1.-" evidence="1"/>
<dbReference type="EMBL" id="CP000783">
    <property type="protein sequence ID" value="ABU78418.1"/>
    <property type="molecule type" value="Genomic_DNA"/>
</dbReference>
<dbReference type="SMR" id="A7MGQ9"/>
<dbReference type="KEGG" id="esa:ESA_03196"/>
<dbReference type="PATRIC" id="fig|290339.8.peg.2827"/>
<dbReference type="HOGENOM" id="CLU_015768_0_1_6"/>
<dbReference type="Proteomes" id="UP000000260">
    <property type="component" value="Chromosome"/>
</dbReference>
<dbReference type="GO" id="GO:0005829">
    <property type="term" value="C:cytosol"/>
    <property type="evidence" value="ECO:0007669"/>
    <property type="project" value="TreeGrafter"/>
</dbReference>
<dbReference type="GO" id="GO:0005524">
    <property type="term" value="F:ATP binding"/>
    <property type="evidence" value="ECO:0007669"/>
    <property type="project" value="UniProtKB-KW"/>
</dbReference>
<dbReference type="GO" id="GO:0004818">
    <property type="term" value="F:glutamate-tRNA ligase activity"/>
    <property type="evidence" value="ECO:0007669"/>
    <property type="project" value="TreeGrafter"/>
</dbReference>
<dbReference type="GO" id="GO:0008270">
    <property type="term" value="F:zinc ion binding"/>
    <property type="evidence" value="ECO:0007669"/>
    <property type="project" value="UniProtKB-UniRule"/>
</dbReference>
<dbReference type="GO" id="GO:0006424">
    <property type="term" value="P:glutamyl-tRNA aminoacylation"/>
    <property type="evidence" value="ECO:0007669"/>
    <property type="project" value="InterPro"/>
</dbReference>
<dbReference type="GO" id="GO:0006400">
    <property type="term" value="P:tRNA modification"/>
    <property type="evidence" value="ECO:0007669"/>
    <property type="project" value="InterPro"/>
</dbReference>
<dbReference type="FunFam" id="3.40.50.620:FF:000093">
    <property type="entry name" value="Glutamyl-Q tRNA(Asp) synthetase"/>
    <property type="match status" value="1"/>
</dbReference>
<dbReference type="Gene3D" id="3.40.50.620">
    <property type="entry name" value="HUPs"/>
    <property type="match status" value="1"/>
</dbReference>
<dbReference type="HAMAP" id="MF_01428">
    <property type="entry name" value="Glu_Q_tRNA_synth"/>
    <property type="match status" value="1"/>
</dbReference>
<dbReference type="InterPro" id="IPR022380">
    <property type="entry name" value="Glu-Q_tRNA(Asp)_Synthase"/>
</dbReference>
<dbReference type="InterPro" id="IPR000924">
    <property type="entry name" value="Glu/Gln-tRNA-synth"/>
</dbReference>
<dbReference type="InterPro" id="IPR020058">
    <property type="entry name" value="Glu/Gln-tRNA-synth_Ib_cat-dom"/>
</dbReference>
<dbReference type="InterPro" id="IPR049940">
    <property type="entry name" value="GluQ/Sye"/>
</dbReference>
<dbReference type="InterPro" id="IPR014729">
    <property type="entry name" value="Rossmann-like_a/b/a_fold"/>
</dbReference>
<dbReference type="NCBIfam" id="NF004312">
    <property type="entry name" value="PRK05710.1-1"/>
    <property type="match status" value="1"/>
</dbReference>
<dbReference type="NCBIfam" id="NF004314">
    <property type="entry name" value="PRK05710.1-3"/>
    <property type="match status" value="1"/>
</dbReference>
<dbReference type="NCBIfam" id="TIGR03838">
    <property type="entry name" value="queuosine_YadB"/>
    <property type="match status" value="1"/>
</dbReference>
<dbReference type="PANTHER" id="PTHR43311">
    <property type="entry name" value="GLUTAMATE--TRNA LIGASE"/>
    <property type="match status" value="1"/>
</dbReference>
<dbReference type="PANTHER" id="PTHR43311:SF1">
    <property type="entry name" value="GLUTAMYL-Q TRNA(ASP) SYNTHETASE"/>
    <property type="match status" value="1"/>
</dbReference>
<dbReference type="Pfam" id="PF00749">
    <property type="entry name" value="tRNA-synt_1c"/>
    <property type="match status" value="1"/>
</dbReference>
<dbReference type="PRINTS" id="PR00987">
    <property type="entry name" value="TRNASYNTHGLU"/>
</dbReference>
<dbReference type="SUPFAM" id="SSF52374">
    <property type="entry name" value="Nucleotidylyl transferase"/>
    <property type="match status" value="1"/>
</dbReference>
<accession>A7MGQ9</accession>
<evidence type="ECO:0000255" key="1">
    <source>
        <dbReference type="HAMAP-Rule" id="MF_01428"/>
    </source>
</evidence>
<comment type="function">
    <text evidence="1">Catalyzes the tRNA-independent activation of glutamate in presence of ATP and the subsequent transfer of glutamate onto a tRNA(Asp). Glutamate is transferred on the 2-amino-5-(4,5-dihydroxy-2-cyclopenten-1-yl) moiety of the queuosine in the wobble position of the QUC anticodon.</text>
</comment>
<comment type="cofactor">
    <cofactor evidence="1">
        <name>Zn(2+)</name>
        <dbReference type="ChEBI" id="CHEBI:29105"/>
    </cofactor>
    <text evidence="1">Binds 1 zinc ion per subunit.</text>
</comment>
<comment type="similarity">
    <text evidence="1">Belongs to the class-I aminoacyl-tRNA synthetase family. GluQ subfamily.</text>
</comment>
<gene>
    <name evidence="1" type="primary">gluQ</name>
    <name type="ordered locus">ESA_03196</name>
</gene>
<sequence length="298" mass="33234">MSVKPYIGRFAPSPSGELHFGSLIAALGSYLQARALKGQWLVRIEDIDPPREVPGAADAILRQLDHYGLHWDGEVLYQSQRHEAYREALAYLREHGLSYYCTCPRSRIQQLGGIYDGHCRALRHGPENAAVRLVQTHPVMAFTDKLRGDITADPALAREDFIIHRRDGLFAYNLAVVVDDHFQGVTEIVRGADLIEPTVRQISLYQQFGWQAPDYVHLPLVVNPDGNKLSKQNHAPPLPEGDPRPVLVEALAFLNQPVDDDWRALSTETLLRQAVEKWDLSAVPAAAAANPAFSNALR</sequence>
<proteinExistence type="inferred from homology"/>
<feature type="chain" id="PRO_1000024355" description="Glutamyl-Q tRNA(Asp) synthetase">
    <location>
        <begin position="1"/>
        <end position="298"/>
    </location>
</feature>
<feature type="short sequence motif" description="'HIGH' region">
    <location>
        <begin position="12"/>
        <end position="22"/>
    </location>
</feature>
<feature type="short sequence motif" description="'KMSKS' region">
    <location>
        <begin position="228"/>
        <end position="232"/>
    </location>
</feature>
<feature type="binding site" evidence="1">
    <location>
        <begin position="9"/>
        <end position="13"/>
    </location>
    <ligand>
        <name>L-glutamate</name>
        <dbReference type="ChEBI" id="CHEBI:29985"/>
    </ligand>
</feature>
<feature type="binding site" evidence="1">
    <location>
        <position position="45"/>
    </location>
    <ligand>
        <name>L-glutamate</name>
        <dbReference type="ChEBI" id="CHEBI:29985"/>
    </ligand>
</feature>
<feature type="binding site" evidence="1">
    <location>
        <position position="101"/>
    </location>
    <ligand>
        <name>Zn(2+)</name>
        <dbReference type="ChEBI" id="CHEBI:29105"/>
    </ligand>
</feature>
<feature type="binding site" evidence="1">
    <location>
        <position position="103"/>
    </location>
    <ligand>
        <name>Zn(2+)</name>
        <dbReference type="ChEBI" id="CHEBI:29105"/>
    </ligand>
</feature>
<feature type="binding site" evidence="1">
    <location>
        <position position="115"/>
    </location>
    <ligand>
        <name>Zn(2+)</name>
        <dbReference type="ChEBI" id="CHEBI:29105"/>
    </ligand>
</feature>
<feature type="binding site" evidence="1">
    <location>
        <position position="119"/>
    </location>
    <ligand>
        <name>Zn(2+)</name>
        <dbReference type="ChEBI" id="CHEBI:29105"/>
    </ligand>
</feature>
<feature type="binding site" evidence="1">
    <location>
        <position position="172"/>
    </location>
    <ligand>
        <name>L-glutamate</name>
        <dbReference type="ChEBI" id="CHEBI:29985"/>
    </ligand>
</feature>
<feature type="binding site" evidence="1">
    <location>
        <position position="190"/>
    </location>
    <ligand>
        <name>L-glutamate</name>
        <dbReference type="ChEBI" id="CHEBI:29985"/>
    </ligand>
</feature>
<feature type="binding site" evidence="1">
    <location>
        <position position="231"/>
    </location>
    <ligand>
        <name>ATP</name>
        <dbReference type="ChEBI" id="CHEBI:30616"/>
    </ligand>
</feature>